<feature type="chain" id="PRO_1000066972" description="Glucosamine-6-phosphate deaminase">
    <location>
        <begin position="1"/>
        <end position="242"/>
    </location>
</feature>
<feature type="active site" description="Proton acceptor; for enolization step" evidence="1">
    <location>
        <position position="67"/>
    </location>
</feature>
<feature type="active site" description="For ring-opening step" evidence="1">
    <location>
        <position position="136"/>
    </location>
</feature>
<feature type="active site" description="Proton acceptor; for ring-opening step" evidence="1">
    <location>
        <position position="138"/>
    </location>
</feature>
<feature type="active site" description="For ring-opening step" evidence="1">
    <location>
        <position position="143"/>
    </location>
</feature>
<comment type="function">
    <text evidence="1">Catalyzes the reversible isomerization-deamination of glucosamine 6-phosphate (GlcN6P) to form fructose 6-phosphate (Fru6P) and ammonium ion.</text>
</comment>
<comment type="catalytic activity">
    <reaction evidence="1">
        <text>alpha-D-glucosamine 6-phosphate + H2O = beta-D-fructose 6-phosphate + NH4(+)</text>
        <dbReference type="Rhea" id="RHEA:12172"/>
        <dbReference type="ChEBI" id="CHEBI:15377"/>
        <dbReference type="ChEBI" id="CHEBI:28938"/>
        <dbReference type="ChEBI" id="CHEBI:57634"/>
        <dbReference type="ChEBI" id="CHEBI:75989"/>
        <dbReference type="EC" id="3.5.99.6"/>
    </reaction>
</comment>
<comment type="pathway">
    <text evidence="1">Amino-sugar metabolism; N-acetylneuraminate degradation; D-fructose 6-phosphate from N-acetylneuraminate: step 5/5.</text>
</comment>
<comment type="similarity">
    <text evidence="1">Belongs to the glucosamine/galactosamine-6-phosphate isomerase family. NagB subfamily.</text>
</comment>
<sequence length="242" mass="26653">MRLIVTKNYEEMSKVAAKEMAEDIKRNPEIVLGLATGGTPVGMYKELIRMYNEGELDFSKVTSINLDEYVGLSGDHDQSYRYFMNTNLFNHINIDKNNTFVPNGLAENVEEECMAYDARIQDMGGIDLQLLGLGANGHIGFNEPGEALSVGTHLTDLKESTIEANARFFDSIDDVPRKAITMGLGGIMKAKKIMVIASGEGKAEVVKAMMSGKITTEIPATMLQMHRDVILIVDEDAAKLLK</sequence>
<proteinExistence type="inferred from homology"/>
<name>NAGB_CLOP1</name>
<reference key="1">
    <citation type="journal article" date="2006" name="Genome Res.">
        <title>Skewed genomic variability in strains of the toxigenic bacterial pathogen, Clostridium perfringens.</title>
        <authorList>
            <person name="Myers G.S.A."/>
            <person name="Rasko D.A."/>
            <person name="Cheung J.K."/>
            <person name="Ravel J."/>
            <person name="Seshadri R."/>
            <person name="DeBoy R.T."/>
            <person name="Ren Q."/>
            <person name="Varga J."/>
            <person name="Awad M.M."/>
            <person name="Brinkac L.M."/>
            <person name="Daugherty S.C."/>
            <person name="Haft D.H."/>
            <person name="Dodson R.J."/>
            <person name="Madupu R."/>
            <person name="Nelson W.C."/>
            <person name="Rosovitz M.J."/>
            <person name="Sullivan S.A."/>
            <person name="Khouri H."/>
            <person name="Dimitrov G.I."/>
            <person name="Watkins K.L."/>
            <person name="Mulligan S."/>
            <person name="Benton J."/>
            <person name="Radune D."/>
            <person name="Fisher D.J."/>
            <person name="Atkins H.S."/>
            <person name="Hiscox T."/>
            <person name="Jost B.H."/>
            <person name="Billington S.J."/>
            <person name="Songer J.G."/>
            <person name="McClane B.A."/>
            <person name="Titball R.W."/>
            <person name="Rood J.I."/>
            <person name="Melville S.B."/>
            <person name="Paulsen I.T."/>
        </authorList>
    </citation>
    <scope>NUCLEOTIDE SEQUENCE [LARGE SCALE GENOMIC DNA]</scope>
    <source>
        <strain>ATCC 13124 / DSM 756 / JCM 1290 / NCIMB 6125 / NCTC 8237 / S 107 / Type A</strain>
    </source>
</reference>
<organism>
    <name type="scientific">Clostridium perfringens (strain ATCC 13124 / DSM 756 / JCM 1290 / NCIMB 6125 / NCTC 8237 / Type A)</name>
    <dbReference type="NCBI Taxonomy" id="195103"/>
    <lineage>
        <taxon>Bacteria</taxon>
        <taxon>Bacillati</taxon>
        <taxon>Bacillota</taxon>
        <taxon>Clostridia</taxon>
        <taxon>Eubacteriales</taxon>
        <taxon>Clostridiaceae</taxon>
        <taxon>Clostridium</taxon>
    </lineage>
</organism>
<keyword id="KW-0119">Carbohydrate metabolism</keyword>
<keyword id="KW-0378">Hydrolase</keyword>
<dbReference type="EC" id="3.5.99.6" evidence="1"/>
<dbReference type="EMBL" id="CP000246">
    <property type="protein sequence ID" value="ABG84042.1"/>
    <property type="molecule type" value="Genomic_DNA"/>
</dbReference>
<dbReference type="RefSeq" id="WP_011591132.1">
    <property type="nucleotide sequence ID" value="NC_008261.1"/>
</dbReference>
<dbReference type="SMR" id="Q0TML8"/>
<dbReference type="STRING" id="195103.CPF_2744"/>
<dbReference type="PaxDb" id="195103-CPF_2744"/>
<dbReference type="KEGG" id="cpf:CPF_2744"/>
<dbReference type="eggNOG" id="COG0363">
    <property type="taxonomic scope" value="Bacteria"/>
</dbReference>
<dbReference type="HOGENOM" id="CLU_049611_1_1_9"/>
<dbReference type="UniPathway" id="UPA00629">
    <property type="reaction ID" value="UER00684"/>
</dbReference>
<dbReference type="Proteomes" id="UP000001823">
    <property type="component" value="Chromosome"/>
</dbReference>
<dbReference type="GO" id="GO:0005737">
    <property type="term" value="C:cytoplasm"/>
    <property type="evidence" value="ECO:0007669"/>
    <property type="project" value="TreeGrafter"/>
</dbReference>
<dbReference type="GO" id="GO:0004342">
    <property type="term" value="F:glucosamine-6-phosphate deaminase activity"/>
    <property type="evidence" value="ECO:0007669"/>
    <property type="project" value="UniProtKB-UniRule"/>
</dbReference>
<dbReference type="GO" id="GO:0042802">
    <property type="term" value="F:identical protein binding"/>
    <property type="evidence" value="ECO:0007669"/>
    <property type="project" value="TreeGrafter"/>
</dbReference>
<dbReference type="GO" id="GO:0005975">
    <property type="term" value="P:carbohydrate metabolic process"/>
    <property type="evidence" value="ECO:0007669"/>
    <property type="project" value="InterPro"/>
</dbReference>
<dbReference type="GO" id="GO:0006043">
    <property type="term" value="P:glucosamine catabolic process"/>
    <property type="evidence" value="ECO:0007669"/>
    <property type="project" value="TreeGrafter"/>
</dbReference>
<dbReference type="GO" id="GO:0006046">
    <property type="term" value="P:N-acetylglucosamine catabolic process"/>
    <property type="evidence" value="ECO:0007669"/>
    <property type="project" value="TreeGrafter"/>
</dbReference>
<dbReference type="GO" id="GO:0019262">
    <property type="term" value="P:N-acetylneuraminate catabolic process"/>
    <property type="evidence" value="ECO:0007669"/>
    <property type="project" value="UniProtKB-UniRule"/>
</dbReference>
<dbReference type="CDD" id="cd01399">
    <property type="entry name" value="GlcN6P_deaminase"/>
    <property type="match status" value="1"/>
</dbReference>
<dbReference type="FunFam" id="3.40.50.1360:FF:000003">
    <property type="entry name" value="Glucosamine-6-phosphate deaminase"/>
    <property type="match status" value="1"/>
</dbReference>
<dbReference type="Gene3D" id="3.40.50.1360">
    <property type="match status" value="1"/>
</dbReference>
<dbReference type="HAMAP" id="MF_01241">
    <property type="entry name" value="GlcN6P_deamin"/>
    <property type="match status" value="1"/>
</dbReference>
<dbReference type="InterPro" id="IPR006148">
    <property type="entry name" value="Glc/Gal-6P_isomerase"/>
</dbReference>
<dbReference type="InterPro" id="IPR004547">
    <property type="entry name" value="Glucosamine6P_isomerase"/>
</dbReference>
<dbReference type="InterPro" id="IPR018321">
    <property type="entry name" value="Glucosamine6P_isomerase_CS"/>
</dbReference>
<dbReference type="InterPro" id="IPR037171">
    <property type="entry name" value="NagB/RpiA_transferase-like"/>
</dbReference>
<dbReference type="NCBIfam" id="TIGR00502">
    <property type="entry name" value="nagB"/>
    <property type="match status" value="1"/>
</dbReference>
<dbReference type="NCBIfam" id="NF001684">
    <property type="entry name" value="PRK00443.1-4"/>
    <property type="match status" value="1"/>
</dbReference>
<dbReference type="PANTHER" id="PTHR11280">
    <property type="entry name" value="GLUCOSAMINE-6-PHOSPHATE ISOMERASE"/>
    <property type="match status" value="1"/>
</dbReference>
<dbReference type="PANTHER" id="PTHR11280:SF5">
    <property type="entry name" value="GLUCOSAMINE-6-PHOSPHATE ISOMERASE"/>
    <property type="match status" value="1"/>
</dbReference>
<dbReference type="Pfam" id="PF01182">
    <property type="entry name" value="Glucosamine_iso"/>
    <property type="match status" value="1"/>
</dbReference>
<dbReference type="SUPFAM" id="SSF100950">
    <property type="entry name" value="NagB/RpiA/CoA transferase-like"/>
    <property type="match status" value="1"/>
</dbReference>
<dbReference type="PROSITE" id="PS01161">
    <property type="entry name" value="GLC_GALNAC_ISOMERASE"/>
    <property type="match status" value="1"/>
</dbReference>
<evidence type="ECO:0000255" key="1">
    <source>
        <dbReference type="HAMAP-Rule" id="MF_01241"/>
    </source>
</evidence>
<protein>
    <recommendedName>
        <fullName evidence="1">Glucosamine-6-phosphate deaminase</fullName>
        <ecNumber evidence="1">3.5.99.6</ecNumber>
    </recommendedName>
    <alternativeName>
        <fullName evidence="1">GlcN6P deaminase</fullName>
        <shortName evidence="1">GNPDA</shortName>
    </alternativeName>
    <alternativeName>
        <fullName evidence="1">Glucosamine-6-phosphate isomerase</fullName>
    </alternativeName>
</protein>
<accession>Q0TML8</accession>
<gene>
    <name evidence="1" type="primary">nagB</name>
    <name type="ordered locus">CPF_2744</name>
</gene>